<protein>
    <recommendedName>
        <fullName evidence="1">Histidinol-phosphate aminotransferase</fullName>
        <ecNumber evidence="1">2.6.1.9</ecNumber>
    </recommendedName>
    <alternativeName>
        <fullName evidence="1">Imidazole acetol-phosphate transaminase</fullName>
    </alternativeName>
</protein>
<gene>
    <name evidence="1" type="primary">hisC</name>
    <name type="ordered locus">EFER_2104</name>
</gene>
<name>HIS8_ESCF3</name>
<accession>B7LUF2</accession>
<reference key="1">
    <citation type="journal article" date="2009" name="PLoS Genet.">
        <title>Organised genome dynamics in the Escherichia coli species results in highly diverse adaptive paths.</title>
        <authorList>
            <person name="Touchon M."/>
            <person name="Hoede C."/>
            <person name="Tenaillon O."/>
            <person name="Barbe V."/>
            <person name="Baeriswyl S."/>
            <person name="Bidet P."/>
            <person name="Bingen E."/>
            <person name="Bonacorsi S."/>
            <person name="Bouchier C."/>
            <person name="Bouvet O."/>
            <person name="Calteau A."/>
            <person name="Chiapello H."/>
            <person name="Clermont O."/>
            <person name="Cruveiller S."/>
            <person name="Danchin A."/>
            <person name="Diard M."/>
            <person name="Dossat C."/>
            <person name="Karoui M.E."/>
            <person name="Frapy E."/>
            <person name="Garry L."/>
            <person name="Ghigo J.M."/>
            <person name="Gilles A.M."/>
            <person name="Johnson J."/>
            <person name="Le Bouguenec C."/>
            <person name="Lescat M."/>
            <person name="Mangenot S."/>
            <person name="Martinez-Jehanne V."/>
            <person name="Matic I."/>
            <person name="Nassif X."/>
            <person name="Oztas S."/>
            <person name="Petit M.A."/>
            <person name="Pichon C."/>
            <person name="Rouy Z."/>
            <person name="Ruf C.S."/>
            <person name="Schneider D."/>
            <person name="Tourret J."/>
            <person name="Vacherie B."/>
            <person name="Vallenet D."/>
            <person name="Medigue C."/>
            <person name="Rocha E.P.C."/>
            <person name="Denamur E."/>
        </authorList>
    </citation>
    <scope>NUCLEOTIDE SEQUENCE [LARGE SCALE GENOMIC DNA]</scope>
    <source>
        <strain>ATCC 35469 / DSM 13698 / BCRC 15582 / CCUG 18766 / IAM 14443 / JCM 21226 / LMG 7866 / NBRC 102419 / NCTC 12128 / CDC 0568-73</strain>
    </source>
</reference>
<dbReference type="EC" id="2.6.1.9" evidence="1"/>
<dbReference type="EMBL" id="CU928158">
    <property type="protein sequence ID" value="CAQ89607.1"/>
    <property type="molecule type" value="Genomic_DNA"/>
</dbReference>
<dbReference type="RefSeq" id="WP_000108922.1">
    <property type="nucleotide sequence ID" value="NC_011740.1"/>
</dbReference>
<dbReference type="SMR" id="B7LUF2"/>
<dbReference type="GeneID" id="75056862"/>
<dbReference type="KEGG" id="efe:EFER_2104"/>
<dbReference type="HOGENOM" id="CLU_017584_3_1_6"/>
<dbReference type="OrthoDB" id="9813612at2"/>
<dbReference type="UniPathway" id="UPA00031">
    <property type="reaction ID" value="UER00012"/>
</dbReference>
<dbReference type="Proteomes" id="UP000000745">
    <property type="component" value="Chromosome"/>
</dbReference>
<dbReference type="GO" id="GO:0004400">
    <property type="term" value="F:histidinol-phosphate transaminase activity"/>
    <property type="evidence" value="ECO:0007669"/>
    <property type="project" value="UniProtKB-UniRule"/>
</dbReference>
<dbReference type="GO" id="GO:0030170">
    <property type="term" value="F:pyridoxal phosphate binding"/>
    <property type="evidence" value="ECO:0007669"/>
    <property type="project" value="InterPro"/>
</dbReference>
<dbReference type="GO" id="GO:0000105">
    <property type="term" value="P:L-histidine biosynthetic process"/>
    <property type="evidence" value="ECO:0007669"/>
    <property type="project" value="UniProtKB-UniRule"/>
</dbReference>
<dbReference type="CDD" id="cd00609">
    <property type="entry name" value="AAT_like"/>
    <property type="match status" value="1"/>
</dbReference>
<dbReference type="FunFam" id="3.40.640.10:FF:000032">
    <property type="entry name" value="Histidinol-phosphate aminotransferase"/>
    <property type="match status" value="1"/>
</dbReference>
<dbReference type="FunFam" id="3.90.1150.10:FF:000042">
    <property type="entry name" value="Histidinol-phosphate aminotransferase"/>
    <property type="match status" value="1"/>
</dbReference>
<dbReference type="Gene3D" id="3.90.1150.10">
    <property type="entry name" value="Aspartate Aminotransferase, domain 1"/>
    <property type="match status" value="1"/>
</dbReference>
<dbReference type="Gene3D" id="3.40.640.10">
    <property type="entry name" value="Type I PLP-dependent aspartate aminotransferase-like (Major domain)"/>
    <property type="match status" value="1"/>
</dbReference>
<dbReference type="HAMAP" id="MF_01023">
    <property type="entry name" value="HisC_aminotrans_2"/>
    <property type="match status" value="1"/>
</dbReference>
<dbReference type="InterPro" id="IPR001917">
    <property type="entry name" value="Aminotrans_II_pyridoxalP_BS"/>
</dbReference>
<dbReference type="InterPro" id="IPR004839">
    <property type="entry name" value="Aminotransferase_I/II_large"/>
</dbReference>
<dbReference type="InterPro" id="IPR005861">
    <property type="entry name" value="HisP_aminotrans"/>
</dbReference>
<dbReference type="InterPro" id="IPR015424">
    <property type="entry name" value="PyrdxlP-dep_Trfase"/>
</dbReference>
<dbReference type="InterPro" id="IPR015421">
    <property type="entry name" value="PyrdxlP-dep_Trfase_major"/>
</dbReference>
<dbReference type="InterPro" id="IPR015422">
    <property type="entry name" value="PyrdxlP-dep_Trfase_small"/>
</dbReference>
<dbReference type="NCBIfam" id="TIGR01141">
    <property type="entry name" value="hisC"/>
    <property type="match status" value="1"/>
</dbReference>
<dbReference type="PANTHER" id="PTHR42885:SF2">
    <property type="entry name" value="HISTIDINOL-PHOSPHATE AMINOTRANSFERASE"/>
    <property type="match status" value="1"/>
</dbReference>
<dbReference type="PANTHER" id="PTHR42885">
    <property type="entry name" value="HISTIDINOL-PHOSPHATE AMINOTRANSFERASE-RELATED"/>
    <property type="match status" value="1"/>
</dbReference>
<dbReference type="Pfam" id="PF00155">
    <property type="entry name" value="Aminotran_1_2"/>
    <property type="match status" value="1"/>
</dbReference>
<dbReference type="SUPFAM" id="SSF53383">
    <property type="entry name" value="PLP-dependent transferases"/>
    <property type="match status" value="1"/>
</dbReference>
<dbReference type="PROSITE" id="PS00599">
    <property type="entry name" value="AA_TRANSFER_CLASS_2"/>
    <property type="match status" value="1"/>
</dbReference>
<organism>
    <name type="scientific">Escherichia fergusonii (strain ATCC 35469 / DSM 13698 / CCUG 18766 / IAM 14443 / JCM 21226 / LMG 7866 / NBRC 102419 / NCTC 12128 / CDC 0568-73)</name>
    <dbReference type="NCBI Taxonomy" id="585054"/>
    <lineage>
        <taxon>Bacteria</taxon>
        <taxon>Pseudomonadati</taxon>
        <taxon>Pseudomonadota</taxon>
        <taxon>Gammaproteobacteria</taxon>
        <taxon>Enterobacterales</taxon>
        <taxon>Enterobacteriaceae</taxon>
        <taxon>Escherichia</taxon>
    </lineage>
</organism>
<feature type="chain" id="PRO_1000135399" description="Histidinol-phosphate aminotransferase">
    <location>
        <begin position="1"/>
        <end position="356"/>
    </location>
</feature>
<feature type="modified residue" description="N6-(pyridoxal phosphate)lysine" evidence="1">
    <location>
        <position position="214"/>
    </location>
</feature>
<proteinExistence type="inferred from homology"/>
<comment type="catalytic activity">
    <reaction evidence="1">
        <text>L-histidinol phosphate + 2-oxoglutarate = 3-(imidazol-4-yl)-2-oxopropyl phosphate + L-glutamate</text>
        <dbReference type="Rhea" id="RHEA:23744"/>
        <dbReference type="ChEBI" id="CHEBI:16810"/>
        <dbReference type="ChEBI" id="CHEBI:29985"/>
        <dbReference type="ChEBI" id="CHEBI:57766"/>
        <dbReference type="ChEBI" id="CHEBI:57980"/>
        <dbReference type="EC" id="2.6.1.9"/>
    </reaction>
</comment>
<comment type="cofactor">
    <cofactor evidence="1">
        <name>pyridoxal 5'-phosphate</name>
        <dbReference type="ChEBI" id="CHEBI:597326"/>
    </cofactor>
</comment>
<comment type="pathway">
    <text evidence="1">Amino-acid biosynthesis; L-histidine biosynthesis; L-histidine from 5-phospho-alpha-D-ribose 1-diphosphate: step 7/9.</text>
</comment>
<comment type="subunit">
    <text evidence="1">Homodimer.</text>
</comment>
<comment type="similarity">
    <text evidence="1">Belongs to the class-II pyridoxal-phosphate-dependent aminotransferase family. Histidinol-phosphate aminotransferase subfamily.</text>
</comment>
<keyword id="KW-0028">Amino-acid biosynthesis</keyword>
<keyword id="KW-0032">Aminotransferase</keyword>
<keyword id="KW-0368">Histidine biosynthesis</keyword>
<keyword id="KW-0663">Pyridoxal phosphate</keyword>
<keyword id="KW-0808">Transferase</keyword>
<sequence>MSTVTITDLARENVRNLTPYQSARRLGGNGDVWLNANEYPTAVEFQLTQQTLNRYPECQPKAVIDNYAQYAGVKPEQVLVSRGADEGIELLIRAFCEPGKDAILYCPPTYGMYSVSAETIGVECRTVPTLENWQLDLQGISDKLDGVKVVYVCSPNNPTGQLINPQDFRTLLELTRGKAIVVADEAYIEFCPQASLAGWLAEYPHLAILRTLSKAFALAGLRCGFTLANEDVINLLMKVIAPYPLSTPVADIAAQALSPQGILAMRERVVQIIAEREYLIGALKEIPCVEQVFDSETNYILARFKASSAVFKSLWDQGIILRDQNKQPSLSGCLRITVGTREESQRVIDALRAEQV</sequence>
<evidence type="ECO:0000255" key="1">
    <source>
        <dbReference type="HAMAP-Rule" id="MF_01023"/>
    </source>
</evidence>